<gene>
    <name evidence="1" type="primary">lolD</name>
    <name type="ordered locus">GOX0077</name>
</gene>
<feature type="chain" id="PRO_0000272091" description="Lipoprotein-releasing system ATP-binding protein LolD">
    <location>
        <begin position="1"/>
        <end position="231"/>
    </location>
</feature>
<feature type="domain" description="ABC transporter" evidence="1">
    <location>
        <begin position="11"/>
        <end position="231"/>
    </location>
</feature>
<feature type="binding site" evidence="1">
    <location>
        <begin position="47"/>
        <end position="54"/>
    </location>
    <ligand>
        <name>ATP</name>
        <dbReference type="ChEBI" id="CHEBI:30616"/>
    </ligand>
</feature>
<accession>Q5FUV5</accession>
<dbReference type="EC" id="7.6.2.-" evidence="1"/>
<dbReference type="EMBL" id="CP000009">
    <property type="protein sequence ID" value="AAW59874.1"/>
    <property type="molecule type" value="Genomic_DNA"/>
</dbReference>
<dbReference type="RefSeq" id="WP_011251678.1">
    <property type="nucleotide sequence ID" value="NC_006677.1"/>
</dbReference>
<dbReference type="SMR" id="Q5FUV5"/>
<dbReference type="STRING" id="290633.GOX0077"/>
<dbReference type="KEGG" id="gox:GOX0077"/>
<dbReference type="eggNOG" id="COG1136">
    <property type="taxonomic scope" value="Bacteria"/>
</dbReference>
<dbReference type="HOGENOM" id="CLU_000604_1_22_5"/>
<dbReference type="Proteomes" id="UP000006375">
    <property type="component" value="Chromosome"/>
</dbReference>
<dbReference type="GO" id="GO:0005886">
    <property type="term" value="C:plasma membrane"/>
    <property type="evidence" value="ECO:0007669"/>
    <property type="project" value="UniProtKB-SubCell"/>
</dbReference>
<dbReference type="GO" id="GO:0005524">
    <property type="term" value="F:ATP binding"/>
    <property type="evidence" value="ECO:0007669"/>
    <property type="project" value="UniProtKB-KW"/>
</dbReference>
<dbReference type="GO" id="GO:0016887">
    <property type="term" value="F:ATP hydrolysis activity"/>
    <property type="evidence" value="ECO:0007669"/>
    <property type="project" value="InterPro"/>
</dbReference>
<dbReference type="GO" id="GO:0022857">
    <property type="term" value="F:transmembrane transporter activity"/>
    <property type="evidence" value="ECO:0007669"/>
    <property type="project" value="TreeGrafter"/>
</dbReference>
<dbReference type="GO" id="GO:0044874">
    <property type="term" value="P:lipoprotein localization to outer membrane"/>
    <property type="evidence" value="ECO:0007669"/>
    <property type="project" value="TreeGrafter"/>
</dbReference>
<dbReference type="GO" id="GO:0089705">
    <property type="term" value="P:protein localization to outer membrane"/>
    <property type="evidence" value="ECO:0007669"/>
    <property type="project" value="TreeGrafter"/>
</dbReference>
<dbReference type="CDD" id="cd03255">
    <property type="entry name" value="ABC_MJ0796_LolCDE_FtsE"/>
    <property type="match status" value="1"/>
</dbReference>
<dbReference type="FunFam" id="3.40.50.300:FF:000032">
    <property type="entry name" value="Export ABC transporter ATP-binding protein"/>
    <property type="match status" value="1"/>
</dbReference>
<dbReference type="Gene3D" id="3.40.50.300">
    <property type="entry name" value="P-loop containing nucleotide triphosphate hydrolases"/>
    <property type="match status" value="1"/>
</dbReference>
<dbReference type="InterPro" id="IPR003593">
    <property type="entry name" value="AAA+_ATPase"/>
</dbReference>
<dbReference type="InterPro" id="IPR003439">
    <property type="entry name" value="ABC_transporter-like_ATP-bd"/>
</dbReference>
<dbReference type="InterPro" id="IPR015854">
    <property type="entry name" value="ABC_transpr_LolD-like"/>
</dbReference>
<dbReference type="InterPro" id="IPR017911">
    <property type="entry name" value="MacB-like_ATP-bd"/>
</dbReference>
<dbReference type="InterPro" id="IPR027417">
    <property type="entry name" value="P-loop_NTPase"/>
</dbReference>
<dbReference type="PANTHER" id="PTHR24220">
    <property type="entry name" value="IMPORT ATP-BINDING PROTEIN"/>
    <property type="match status" value="1"/>
</dbReference>
<dbReference type="PANTHER" id="PTHR24220:SF689">
    <property type="entry name" value="LIPOPROTEIN-RELEASING SYSTEM ATP-BINDING PROTEIN LOLD"/>
    <property type="match status" value="1"/>
</dbReference>
<dbReference type="Pfam" id="PF00005">
    <property type="entry name" value="ABC_tran"/>
    <property type="match status" value="1"/>
</dbReference>
<dbReference type="SMART" id="SM00382">
    <property type="entry name" value="AAA"/>
    <property type="match status" value="1"/>
</dbReference>
<dbReference type="SUPFAM" id="SSF52540">
    <property type="entry name" value="P-loop containing nucleoside triphosphate hydrolases"/>
    <property type="match status" value="1"/>
</dbReference>
<dbReference type="PROSITE" id="PS50893">
    <property type="entry name" value="ABC_TRANSPORTER_2"/>
    <property type="match status" value="1"/>
</dbReference>
<dbReference type="PROSITE" id="PS51244">
    <property type="entry name" value="LOLD"/>
    <property type="match status" value="1"/>
</dbReference>
<reference key="1">
    <citation type="journal article" date="2005" name="Nat. Biotechnol.">
        <title>Complete genome sequence of the acetic acid bacterium Gluconobacter oxydans.</title>
        <authorList>
            <person name="Prust C."/>
            <person name="Hoffmeister M."/>
            <person name="Liesegang H."/>
            <person name="Wiezer A."/>
            <person name="Fricke W.F."/>
            <person name="Ehrenreich A."/>
            <person name="Gottschalk G."/>
            <person name="Deppenmeier U."/>
        </authorList>
    </citation>
    <scope>NUCLEOTIDE SEQUENCE [LARGE SCALE GENOMIC DNA]</scope>
    <source>
        <strain>621H</strain>
    </source>
</reference>
<name>LOLD_GLUOX</name>
<sequence length="231" mass="24841">MNEVSTGASALRLEGLTRRFRSGEETLEILSGAEFELRAGEIVALVAPSGTGKSTLLHLAGLLEAPSAGTVFVADRPASGLSDTVRTAIRRDQIGFVYQFHHLLGEFTACENVMLPQLIAGVSPRKARERARDLLGRFGLSHRLDSLPGRLSGGEQQRTAIARALANQPKLLLADEPTGNLDIGTADHVFGELLRVVREEGAAALIATHNDELASRMDRTVTLRDGKLVPF</sequence>
<organism>
    <name type="scientific">Gluconobacter oxydans (strain 621H)</name>
    <name type="common">Gluconobacter suboxydans</name>
    <dbReference type="NCBI Taxonomy" id="290633"/>
    <lineage>
        <taxon>Bacteria</taxon>
        <taxon>Pseudomonadati</taxon>
        <taxon>Pseudomonadota</taxon>
        <taxon>Alphaproteobacteria</taxon>
        <taxon>Acetobacterales</taxon>
        <taxon>Acetobacteraceae</taxon>
        <taxon>Gluconobacter</taxon>
    </lineage>
</organism>
<keyword id="KW-0067">ATP-binding</keyword>
<keyword id="KW-0997">Cell inner membrane</keyword>
<keyword id="KW-1003">Cell membrane</keyword>
<keyword id="KW-0472">Membrane</keyword>
<keyword id="KW-0547">Nucleotide-binding</keyword>
<keyword id="KW-1185">Reference proteome</keyword>
<keyword id="KW-1278">Translocase</keyword>
<keyword id="KW-0813">Transport</keyword>
<comment type="function">
    <text evidence="1">Part of the ABC transporter complex LolCDE involved in the translocation of mature outer membrane-directed lipoproteins, from the inner membrane to the periplasmic chaperone, LolA. Responsible for the formation of the LolA-lipoprotein complex in an ATP-dependent manner.</text>
</comment>
<comment type="subunit">
    <text evidence="1">The complex is composed of two ATP-binding proteins (LolD) and two transmembrane proteins (LolC and LolE).</text>
</comment>
<comment type="subcellular location">
    <subcellularLocation>
        <location evidence="1">Cell inner membrane</location>
        <topology evidence="1">Peripheral membrane protein</topology>
    </subcellularLocation>
</comment>
<comment type="similarity">
    <text evidence="1">Belongs to the ABC transporter superfamily. Lipoprotein translocase (TC 3.A.1.125) family.</text>
</comment>
<protein>
    <recommendedName>
        <fullName evidence="1">Lipoprotein-releasing system ATP-binding protein LolD</fullName>
        <ecNumber evidence="1">7.6.2.-</ecNumber>
    </recommendedName>
</protein>
<proteinExistence type="inferred from homology"/>
<evidence type="ECO:0000255" key="1">
    <source>
        <dbReference type="HAMAP-Rule" id="MF_01708"/>
    </source>
</evidence>